<gene>
    <name evidence="1" type="primary">ndhK</name>
</gene>
<accession>A2CI36</accession>
<keyword id="KW-0004">4Fe-4S</keyword>
<keyword id="KW-0150">Chloroplast</keyword>
<keyword id="KW-0408">Iron</keyword>
<keyword id="KW-0411">Iron-sulfur</keyword>
<keyword id="KW-0472">Membrane</keyword>
<keyword id="KW-0479">Metal-binding</keyword>
<keyword id="KW-0520">NAD</keyword>
<keyword id="KW-0521">NADP</keyword>
<keyword id="KW-0934">Plastid</keyword>
<keyword id="KW-0618">Plastoquinone</keyword>
<keyword id="KW-0874">Quinone</keyword>
<keyword id="KW-0793">Thylakoid</keyword>
<keyword id="KW-1278">Translocase</keyword>
<keyword id="KW-0813">Transport</keyword>
<sequence length="274" mass="30629">MVINQKNLSSPVAPYDKSGSQSSTKADIPSINYTVDHSFQKRETSGKELSEATPQVTQSLSNQLILTTLNDLYNWARLSSLWPLLYGTSCCFIEFASLLGSRFDFDRFGLVPRSSPRQADLIITAGTVTMKMAPSLVRLYEQMPEPKYVIAMGACTITGGMFSTDSYSTVRGVDKLIPVDVYLPGCPPKPEAIIDAVIKLRKKVAQEDFVERNNFRQIHRYYSISHEFKSSSTVHTGKYLQSSERKSPPKELSEATGIPIQFILKNTQKTEIQP</sequence>
<protein>
    <recommendedName>
        <fullName evidence="1">NAD(P)H-quinone oxidoreductase subunit K, chloroplastic</fullName>
        <ecNumber evidence="1">7.1.1.-</ecNumber>
    </recommendedName>
    <alternativeName>
        <fullName evidence="1">NAD(P)H dehydrogenase subunit K</fullName>
    </alternativeName>
    <alternativeName>
        <fullName evidence="1">NADH-plastoquinone oxidoreductase subunit K</fullName>
    </alternativeName>
</protein>
<proteinExistence type="inferred from homology"/>
<organism>
    <name type="scientific">Chlorokybus atmophyticus</name>
    <name type="common">Soil alga</name>
    <dbReference type="NCBI Taxonomy" id="3144"/>
    <lineage>
        <taxon>Eukaryota</taxon>
        <taxon>Viridiplantae</taxon>
        <taxon>Streptophyta</taxon>
        <taxon>Chlorokybophyceae</taxon>
        <taxon>Chlorokybales</taxon>
        <taxon>Chlorokybaceae</taxon>
        <taxon>Chlorokybus</taxon>
    </lineage>
</organism>
<dbReference type="EC" id="7.1.1.-" evidence="1"/>
<dbReference type="EMBL" id="DQ422812">
    <property type="protein sequence ID" value="ABM87958.1"/>
    <property type="status" value="ALT_INIT"/>
    <property type="molecule type" value="Genomic_DNA"/>
</dbReference>
<dbReference type="RefSeq" id="YP_001019118.1">
    <property type="nucleotide sequence ID" value="NC_008822.1"/>
</dbReference>
<dbReference type="SMR" id="A2CI36"/>
<dbReference type="GeneID" id="4783286"/>
<dbReference type="GO" id="GO:0009535">
    <property type="term" value="C:chloroplast thylakoid membrane"/>
    <property type="evidence" value="ECO:0007669"/>
    <property type="project" value="UniProtKB-SubCell"/>
</dbReference>
<dbReference type="GO" id="GO:0045271">
    <property type="term" value="C:respiratory chain complex I"/>
    <property type="evidence" value="ECO:0007669"/>
    <property type="project" value="TreeGrafter"/>
</dbReference>
<dbReference type="GO" id="GO:0051539">
    <property type="term" value="F:4 iron, 4 sulfur cluster binding"/>
    <property type="evidence" value="ECO:0007669"/>
    <property type="project" value="UniProtKB-KW"/>
</dbReference>
<dbReference type="GO" id="GO:0005506">
    <property type="term" value="F:iron ion binding"/>
    <property type="evidence" value="ECO:0007669"/>
    <property type="project" value="UniProtKB-UniRule"/>
</dbReference>
<dbReference type="GO" id="GO:0008137">
    <property type="term" value="F:NADH dehydrogenase (ubiquinone) activity"/>
    <property type="evidence" value="ECO:0007669"/>
    <property type="project" value="InterPro"/>
</dbReference>
<dbReference type="GO" id="GO:0048038">
    <property type="term" value="F:quinone binding"/>
    <property type="evidence" value="ECO:0007669"/>
    <property type="project" value="UniProtKB-KW"/>
</dbReference>
<dbReference type="GO" id="GO:0009060">
    <property type="term" value="P:aerobic respiration"/>
    <property type="evidence" value="ECO:0007669"/>
    <property type="project" value="TreeGrafter"/>
</dbReference>
<dbReference type="GO" id="GO:0015990">
    <property type="term" value="P:electron transport coupled proton transport"/>
    <property type="evidence" value="ECO:0007669"/>
    <property type="project" value="TreeGrafter"/>
</dbReference>
<dbReference type="GO" id="GO:0019684">
    <property type="term" value="P:photosynthesis, light reaction"/>
    <property type="evidence" value="ECO:0007669"/>
    <property type="project" value="UniProtKB-UniRule"/>
</dbReference>
<dbReference type="FunFam" id="3.40.50.12280:FF:000003">
    <property type="entry name" value="NAD(P)H-quinone oxidoreductase subunit K, chloroplastic"/>
    <property type="match status" value="1"/>
</dbReference>
<dbReference type="Gene3D" id="3.40.50.12280">
    <property type="match status" value="1"/>
</dbReference>
<dbReference type="HAMAP" id="MF_01356">
    <property type="entry name" value="NDH1_NuoB"/>
    <property type="match status" value="1"/>
</dbReference>
<dbReference type="InterPro" id="IPR006137">
    <property type="entry name" value="NADH_UbQ_OxRdtase-like_20kDa"/>
</dbReference>
<dbReference type="InterPro" id="IPR006138">
    <property type="entry name" value="NADH_UQ_OxRdtase_20Kd_su"/>
</dbReference>
<dbReference type="NCBIfam" id="TIGR01957">
    <property type="entry name" value="nuoB_fam"/>
    <property type="match status" value="1"/>
</dbReference>
<dbReference type="NCBIfam" id="NF005012">
    <property type="entry name" value="PRK06411.1"/>
    <property type="match status" value="1"/>
</dbReference>
<dbReference type="PANTHER" id="PTHR11995">
    <property type="entry name" value="NADH DEHYDROGENASE"/>
    <property type="match status" value="1"/>
</dbReference>
<dbReference type="PANTHER" id="PTHR11995:SF14">
    <property type="entry name" value="NADH DEHYDROGENASE [UBIQUINONE] IRON-SULFUR PROTEIN 7, MITOCHONDRIAL"/>
    <property type="match status" value="1"/>
</dbReference>
<dbReference type="Pfam" id="PF01058">
    <property type="entry name" value="Oxidored_q6"/>
    <property type="match status" value="1"/>
</dbReference>
<dbReference type="SUPFAM" id="SSF56770">
    <property type="entry name" value="HydA/Nqo6-like"/>
    <property type="match status" value="1"/>
</dbReference>
<dbReference type="PROSITE" id="PS01150">
    <property type="entry name" value="COMPLEX1_20K"/>
    <property type="match status" value="1"/>
</dbReference>
<name>NDHK_CHLAT</name>
<geneLocation type="chloroplast"/>
<evidence type="ECO:0000255" key="1">
    <source>
        <dbReference type="HAMAP-Rule" id="MF_01356"/>
    </source>
</evidence>
<evidence type="ECO:0000256" key="2">
    <source>
        <dbReference type="SAM" id="MobiDB-lite"/>
    </source>
</evidence>
<evidence type="ECO:0000305" key="3"/>
<feature type="chain" id="PRO_0000358532" description="NAD(P)H-quinone oxidoreductase subunit K, chloroplastic">
    <location>
        <begin position="1"/>
        <end position="274"/>
    </location>
</feature>
<feature type="region of interest" description="Disordered" evidence="2">
    <location>
        <begin position="1"/>
        <end position="27"/>
    </location>
</feature>
<feature type="compositionally biased region" description="Polar residues" evidence="2">
    <location>
        <begin position="1"/>
        <end position="10"/>
    </location>
</feature>
<feature type="compositionally biased region" description="Polar residues" evidence="2">
    <location>
        <begin position="18"/>
        <end position="27"/>
    </location>
</feature>
<feature type="binding site" evidence="1">
    <location>
        <position position="90"/>
    </location>
    <ligand>
        <name>[4Fe-4S] cluster</name>
        <dbReference type="ChEBI" id="CHEBI:49883"/>
    </ligand>
</feature>
<feature type="binding site" evidence="1">
    <location>
        <position position="91"/>
    </location>
    <ligand>
        <name>[4Fe-4S] cluster</name>
        <dbReference type="ChEBI" id="CHEBI:49883"/>
    </ligand>
</feature>
<feature type="binding site" evidence="1">
    <location>
        <position position="155"/>
    </location>
    <ligand>
        <name>[4Fe-4S] cluster</name>
        <dbReference type="ChEBI" id="CHEBI:49883"/>
    </ligand>
</feature>
<feature type="binding site" evidence="1">
    <location>
        <position position="186"/>
    </location>
    <ligand>
        <name>[4Fe-4S] cluster</name>
        <dbReference type="ChEBI" id="CHEBI:49883"/>
    </ligand>
</feature>
<reference key="1">
    <citation type="journal article" date="2007" name="BMC Biol.">
        <title>A clade uniting the green algae Mesostigma viride and Chlorokybus atmophyticus represents the deepest branch of the Streptophyta in chloroplast genome-based phylogenies.</title>
        <authorList>
            <person name="Lemieux C."/>
            <person name="Otis C."/>
            <person name="Turmel M."/>
        </authorList>
    </citation>
    <scope>NUCLEOTIDE SEQUENCE [LARGE SCALE GENOMIC DNA]</scope>
    <source>
        <strain>SAG 48.80</strain>
    </source>
</reference>
<comment type="function">
    <text evidence="1">NDH shuttles electrons from NAD(P)H:plastoquinone, via FMN and iron-sulfur (Fe-S) centers, to quinones in the photosynthetic chain and possibly in a chloroplast respiratory chain. The immediate electron acceptor for the enzyme in this species is believed to be plastoquinone. Couples the redox reaction to proton translocation, and thus conserves the redox energy in a proton gradient.</text>
</comment>
<comment type="catalytic activity">
    <reaction evidence="1">
        <text>a plastoquinone + NADH + (n+1) H(+)(in) = a plastoquinol + NAD(+) + n H(+)(out)</text>
        <dbReference type="Rhea" id="RHEA:42608"/>
        <dbReference type="Rhea" id="RHEA-COMP:9561"/>
        <dbReference type="Rhea" id="RHEA-COMP:9562"/>
        <dbReference type="ChEBI" id="CHEBI:15378"/>
        <dbReference type="ChEBI" id="CHEBI:17757"/>
        <dbReference type="ChEBI" id="CHEBI:57540"/>
        <dbReference type="ChEBI" id="CHEBI:57945"/>
        <dbReference type="ChEBI" id="CHEBI:62192"/>
    </reaction>
</comment>
<comment type="catalytic activity">
    <reaction evidence="1">
        <text>a plastoquinone + NADPH + (n+1) H(+)(in) = a plastoquinol + NADP(+) + n H(+)(out)</text>
        <dbReference type="Rhea" id="RHEA:42612"/>
        <dbReference type="Rhea" id="RHEA-COMP:9561"/>
        <dbReference type="Rhea" id="RHEA-COMP:9562"/>
        <dbReference type="ChEBI" id="CHEBI:15378"/>
        <dbReference type="ChEBI" id="CHEBI:17757"/>
        <dbReference type="ChEBI" id="CHEBI:57783"/>
        <dbReference type="ChEBI" id="CHEBI:58349"/>
        <dbReference type="ChEBI" id="CHEBI:62192"/>
    </reaction>
</comment>
<comment type="cofactor">
    <cofactor evidence="1">
        <name>[4Fe-4S] cluster</name>
        <dbReference type="ChEBI" id="CHEBI:49883"/>
    </cofactor>
    <text evidence="1">Binds 1 [4Fe-4S] cluster.</text>
</comment>
<comment type="subunit">
    <text evidence="1">NDH is composed of at least 16 different subunits, 5 of which are encoded in the nucleus.</text>
</comment>
<comment type="subcellular location">
    <subcellularLocation>
        <location evidence="1">Plastid</location>
        <location evidence="1">Chloroplast thylakoid membrane</location>
        <topology evidence="1">Peripheral membrane protein</topology>
        <orientation evidence="1">Stromal side</orientation>
    </subcellularLocation>
</comment>
<comment type="similarity">
    <text evidence="1">Belongs to the complex I 20 kDa subunit family.</text>
</comment>
<comment type="sequence caution" evidence="3">
    <conflict type="erroneous initiation">
        <sequence resource="EMBL-CDS" id="ABM87958"/>
    </conflict>
</comment>